<comment type="subcellular location">
    <subcellularLocation>
        <location evidence="1">Spore core</location>
    </subcellularLocation>
</comment>
<comment type="induction">
    <text evidence="1">Expressed only in the forespore compartment of sporulating cells.</text>
</comment>
<comment type="similarity">
    <text evidence="1">Belongs to the SspK family.</text>
</comment>
<sequence length="47" mass="5379">MRNKAHGFPHRISFDGEPDRAKHASKRANGTINTKPQERMHQANPDQ</sequence>
<gene>
    <name evidence="1" type="primary">sspK</name>
    <name type="ordered locus">BH0927</name>
</gene>
<keyword id="KW-1185">Reference proteome</keyword>
<keyword id="KW-0749">Sporulation</keyword>
<reference key="1">
    <citation type="journal article" date="2000" name="Nucleic Acids Res.">
        <title>Complete genome sequence of the alkaliphilic bacterium Bacillus halodurans and genomic sequence comparison with Bacillus subtilis.</title>
        <authorList>
            <person name="Takami H."/>
            <person name="Nakasone K."/>
            <person name="Takaki Y."/>
            <person name="Maeno G."/>
            <person name="Sasaki R."/>
            <person name="Masui N."/>
            <person name="Fuji F."/>
            <person name="Hirama C."/>
            <person name="Nakamura Y."/>
            <person name="Ogasawara N."/>
            <person name="Kuhara S."/>
            <person name="Horikoshi K."/>
        </authorList>
    </citation>
    <scope>NUCLEOTIDE SEQUENCE [LARGE SCALE GENOMIC DNA]</scope>
    <source>
        <strain>ATCC BAA-125 / DSM 18197 / FERM 7344 / JCM 9153 / C-125</strain>
    </source>
</reference>
<protein>
    <recommendedName>
        <fullName evidence="1">Small, acid-soluble spore protein K</fullName>
        <shortName evidence="1">SASP K</shortName>
    </recommendedName>
</protein>
<organism>
    <name type="scientific">Halalkalibacterium halodurans (strain ATCC BAA-125 / DSM 18197 / FERM 7344 / JCM 9153 / C-125)</name>
    <name type="common">Bacillus halodurans</name>
    <dbReference type="NCBI Taxonomy" id="272558"/>
    <lineage>
        <taxon>Bacteria</taxon>
        <taxon>Bacillati</taxon>
        <taxon>Bacillota</taxon>
        <taxon>Bacilli</taxon>
        <taxon>Bacillales</taxon>
        <taxon>Bacillaceae</taxon>
        <taxon>Halalkalibacterium (ex Joshi et al. 2022)</taxon>
    </lineage>
</organism>
<name>SSPK_HALH5</name>
<dbReference type="EMBL" id="BA000004">
    <property type="protein sequence ID" value="BAB04646.1"/>
    <property type="molecule type" value="Genomic_DNA"/>
</dbReference>
<dbReference type="PIR" id="G83765">
    <property type="entry name" value="G83765"/>
</dbReference>
<dbReference type="RefSeq" id="WP_010897099.1">
    <property type="nucleotide sequence ID" value="NC_002570.2"/>
</dbReference>
<dbReference type="STRING" id="272558.gene:10726801"/>
<dbReference type="GeneID" id="87596469"/>
<dbReference type="KEGG" id="bha:BH0927"/>
<dbReference type="HOGENOM" id="CLU_204383_0_0_9"/>
<dbReference type="OrthoDB" id="2382188at2"/>
<dbReference type="Proteomes" id="UP000001258">
    <property type="component" value="Chromosome"/>
</dbReference>
<dbReference type="GO" id="GO:0042601">
    <property type="term" value="C:endospore-forming forespore"/>
    <property type="evidence" value="ECO:0007669"/>
    <property type="project" value="InterPro"/>
</dbReference>
<dbReference type="GO" id="GO:0030436">
    <property type="term" value="P:asexual sporulation"/>
    <property type="evidence" value="ECO:0007669"/>
    <property type="project" value="UniProtKB-UniRule"/>
</dbReference>
<dbReference type="GO" id="GO:0030435">
    <property type="term" value="P:sporulation resulting in formation of a cellular spore"/>
    <property type="evidence" value="ECO:0007669"/>
    <property type="project" value="UniProtKB-KW"/>
</dbReference>
<dbReference type="HAMAP" id="MF_01504">
    <property type="entry name" value="SspK"/>
    <property type="match status" value="1"/>
</dbReference>
<dbReference type="InterPro" id="IPR012611">
    <property type="entry name" value="SASP_SspK"/>
</dbReference>
<dbReference type="NCBIfam" id="TIGR03091">
    <property type="entry name" value="SASP_sspK"/>
    <property type="match status" value="1"/>
</dbReference>
<dbReference type="Pfam" id="PF08176">
    <property type="entry name" value="SspK"/>
    <property type="match status" value="1"/>
</dbReference>
<proteinExistence type="inferred from homology"/>
<feature type="chain" id="PRO_0000221461" description="Small, acid-soluble spore protein K">
    <location>
        <begin position="1"/>
        <end position="47"/>
    </location>
</feature>
<feature type="region of interest" description="Disordered" evidence="2">
    <location>
        <begin position="1"/>
        <end position="47"/>
    </location>
</feature>
<feature type="compositionally biased region" description="Basic and acidic residues" evidence="2">
    <location>
        <begin position="12"/>
        <end position="22"/>
    </location>
</feature>
<accession>Q9KEC6</accession>
<evidence type="ECO:0000255" key="1">
    <source>
        <dbReference type="HAMAP-Rule" id="MF_01504"/>
    </source>
</evidence>
<evidence type="ECO:0000256" key="2">
    <source>
        <dbReference type="SAM" id="MobiDB-lite"/>
    </source>
</evidence>